<sequence length="255" mass="28528">MMHDDPNEAGLPPHNDAIPDETAEGADEVNPLHHRRIRSFVTRAGRVSTGQRRALDEFGPRFVVPYAPEMPDWDAIFGRSAPRILEIGFGMGASTAEIAAHRPSDDFLGVEVHEPGVGALLKLIGEQGLSNIRIIQHDAVEVLEHMIAPASLDGVHIFFPDPWHKARHHKRRLIQPPLVAHLASRLKPGAYLHCATDWQNYAEQMLEVLGAEPTLENTAADYAPRPDYRPVTKFERRGLRLGHGVWDLVFRKRAD</sequence>
<accession>Q1BYF4</accession>
<name>TRMB_BURO1</name>
<feature type="chain" id="PRO_0000288127" description="tRNA (guanine-N(7)-)-methyltransferase">
    <location>
        <begin position="1"/>
        <end position="255"/>
    </location>
</feature>
<feature type="region of interest" description="Disordered" evidence="3">
    <location>
        <begin position="1"/>
        <end position="31"/>
    </location>
</feature>
<feature type="compositionally biased region" description="Acidic residues" evidence="3">
    <location>
        <begin position="18"/>
        <end position="27"/>
    </location>
</feature>
<feature type="active site" evidence="1">
    <location>
        <position position="161"/>
    </location>
</feature>
<feature type="binding site" evidence="2">
    <location>
        <position position="86"/>
    </location>
    <ligand>
        <name>S-adenosyl-L-methionine</name>
        <dbReference type="ChEBI" id="CHEBI:59789"/>
    </ligand>
</feature>
<feature type="binding site" evidence="2">
    <location>
        <position position="111"/>
    </location>
    <ligand>
        <name>S-adenosyl-L-methionine</name>
        <dbReference type="ChEBI" id="CHEBI:59789"/>
    </ligand>
</feature>
<feature type="binding site" evidence="2">
    <location>
        <position position="138"/>
    </location>
    <ligand>
        <name>S-adenosyl-L-methionine</name>
        <dbReference type="ChEBI" id="CHEBI:59789"/>
    </ligand>
</feature>
<feature type="binding site" evidence="2">
    <location>
        <position position="161"/>
    </location>
    <ligand>
        <name>S-adenosyl-L-methionine</name>
        <dbReference type="ChEBI" id="CHEBI:59789"/>
    </ligand>
</feature>
<feature type="binding site" evidence="2">
    <location>
        <position position="165"/>
    </location>
    <ligand>
        <name>substrate</name>
    </ligand>
</feature>
<feature type="binding site" evidence="2">
    <location>
        <position position="197"/>
    </location>
    <ligand>
        <name>substrate</name>
    </ligand>
</feature>
<feature type="binding site" evidence="2">
    <location>
        <begin position="232"/>
        <end position="235"/>
    </location>
    <ligand>
        <name>substrate</name>
    </ligand>
</feature>
<organism>
    <name type="scientific">Burkholderia orbicola (strain AU 1054)</name>
    <dbReference type="NCBI Taxonomy" id="331271"/>
    <lineage>
        <taxon>Bacteria</taxon>
        <taxon>Pseudomonadati</taxon>
        <taxon>Pseudomonadota</taxon>
        <taxon>Betaproteobacteria</taxon>
        <taxon>Burkholderiales</taxon>
        <taxon>Burkholderiaceae</taxon>
        <taxon>Burkholderia</taxon>
        <taxon>Burkholderia cepacia complex</taxon>
        <taxon>Burkholderia orbicola</taxon>
    </lineage>
</organism>
<gene>
    <name evidence="2" type="primary">trmB</name>
    <name type="ordered locus">Bcen_0439</name>
</gene>
<comment type="function">
    <text evidence="2">Catalyzes the formation of N(7)-methylguanine at position 46 (m7G46) in tRNA.</text>
</comment>
<comment type="catalytic activity">
    <reaction evidence="2">
        <text>guanosine(46) in tRNA + S-adenosyl-L-methionine = N(7)-methylguanosine(46) in tRNA + S-adenosyl-L-homocysteine</text>
        <dbReference type="Rhea" id="RHEA:42708"/>
        <dbReference type="Rhea" id="RHEA-COMP:10188"/>
        <dbReference type="Rhea" id="RHEA-COMP:10189"/>
        <dbReference type="ChEBI" id="CHEBI:57856"/>
        <dbReference type="ChEBI" id="CHEBI:59789"/>
        <dbReference type="ChEBI" id="CHEBI:74269"/>
        <dbReference type="ChEBI" id="CHEBI:74480"/>
        <dbReference type="EC" id="2.1.1.33"/>
    </reaction>
</comment>
<comment type="pathway">
    <text evidence="2">tRNA modification; N(7)-methylguanine-tRNA biosynthesis.</text>
</comment>
<comment type="similarity">
    <text evidence="2">Belongs to the class I-like SAM-binding methyltransferase superfamily. TrmB family.</text>
</comment>
<proteinExistence type="inferred from homology"/>
<keyword id="KW-0489">Methyltransferase</keyword>
<keyword id="KW-0949">S-adenosyl-L-methionine</keyword>
<keyword id="KW-0808">Transferase</keyword>
<keyword id="KW-0819">tRNA processing</keyword>
<dbReference type="EC" id="2.1.1.33" evidence="2"/>
<dbReference type="EMBL" id="CP000378">
    <property type="protein sequence ID" value="ABF75351.1"/>
    <property type="molecule type" value="Genomic_DNA"/>
</dbReference>
<dbReference type="SMR" id="Q1BYF4"/>
<dbReference type="HOGENOM" id="CLU_050910_0_1_4"/>
<dbReference type="UniPathway" id="UPA00989"/>
<dbReference type="GO" id="GO:0043527">
    <property type="term" value="C:tRNA methyltransferase complex"/>
    <property type="evidence" value="ECO:0007669"/>
    <property type="project" value="TreeGrafter"/>
</dbReference>
<dbReference type="GO" id="GO:0008176">
    <property type="term" value="F:tRNA (guanine(46)-N7)-methyltransferase activity"/>
    <property type="evidence" value="ECO:0007669"/>
    <property type="project" value="UniProtKB-UniRule"/>
</dbReference>
<dbReference type="CDD" id="cd02440">
    <property type="entry name" value="AdoMet_MTases"/>
    <property type="match status" value="1"/>
</dbReference>
<dbReference type="FunFam" id="3.40.50.150:FF:000035">
    <property type="entry name" value="tRNA (guanine-N(7)-)-methyltransferase"/>
    <property type="match status" value="1"/>
</dbReference>
<dbReference type="Gene3D" id="3.40.50.150">
    <property type="entry name" value="Vaccinia Virus protein VP39"/>
    <property type="match status" value="1"/>
</dbReference>
<dbReference type="HAMAP" id="MF_01057">
    <property type="entry name" value="tRNA_methyltr_TrmB"/>
    <property type="match status" value="1"/>
</dbReference>
<dbReference type="InterPro" id="IPR029063">
    <property type="entry name" value="SAM-dependent_MTases_sf"/>
</dbReference>
<dbReference type="InterPro" id="IPR003358">
    <property type="entry name" value="tRNA_(Gua-N-7)_MeTrfase_Trmb"/>
</dbReference>
<dbReference type="InterPro" id="IPR055361">
    <property type="entry name" value="tRNA_methyltr_TrmB_bact"/>
</dbReference>
<dbReference type="NCBIfam" id="TIGR00091">
    <property type="entry name" value="tRNA (guanosine(46)-N7)-methyltransferase TrmB"/>
    <property type="match status" value="1"/>
</dbReference>
<dbReference type="PANTHER" id="PTHR23417">
    <property type="entry name" value="3-DEOXY-D-MANNO-OCTULOSONIC-ACID TRANSFERASE/TRNA GUANINE-N 7 - -METHYLTRANSFERASE"/>
    <property type="match status" value="1"/>
</dbReference>
<dbReference type="PANTHER" id="PTHR23417:SF14">
    <property type="entry name" value="PENTACOTRIPEPTIDE-REPEAT REGION OF PRORP DOMAIN-CONTAINING PROTEIN"/>
    <property type="match status" value="1"/>
</dbReference>
<dbReference type="Pfam" id="PF02390">
    <property type="entry name" value="Methyltransf_4"/>
    <property type="match status" value="1"/>
</dbReference>
<dbReference type="SUPFAM" id="SSF53335">
    <property type="entry name" value="S-adenosyl-L-methionine-dependent methyltransferases"/>
    <property type="match status" value="1"/>
</dbReference>
<dbReference type="PROSITE" id="PS51625">
    <property type="entry name" value="SAM_MT_TRMB"/>
    <property type="match status" value="1"/>
</dbReference>
<reference key="1">
    <citation type="submission" date="2006-05" db="EMBL/GenBank/DDBJ databases">
        <title>Complete sequence of chromosome 1 of Burkholderia cenocepacia AU 1054.</title>
        <authorList>
            <consortium name="US DOE Joint Genome Institute"/>
            <person name="Copeland A."/>
            <person name="Lucas S."/>
            <person name="Lapidus A."/>
            <person name="Barry K."/>
            <person name="Detter J.C."/>
            <person name="Glavina del Rio T."/>
            <person name="Hammon N."/>
            <person name="Israni S."/>
            <person name="Dalin E."/>
            <person name="Tice H."/>
            <person name="Pitluck S."/>
            <person name="Chain P."/>
            <person name="Malfatti S."/>
            <person name="Shin M."/>
            <person name="Vergez L."/>
            <person name="Schmutz J."/>
            <person name="Larimer F."/>
            <person name="Land M."/>
            <person name="Hauser L."/>
            <person name="Kyrpides N."/>
            <person name="Lykidis A."/>
            <person name="LiPuma J.J."/>
            <person name="Konstantinidis K."/>
            <person name="Tiedje J.M."/>
            <person name="Richardson P."/>
        </authorList>
    </citation>
    <scope>NUCLEOTIDE SEQUENCE [LARGE SCALE GENOMIC DNA]</scope>
    <source>
        <strain>AU 1054</strain>
    </source>
</reference>
<evidence type="ECO:0000250" key="1"/>
<evidence type="ECO:0000255" key="2">
    <source>
        <dbReference type="HAMAP-Rule" id="MF_01057"/>
    </source>
</evidence>
<evidence type="ECO:0000256" key="3">
    <source>
        <dbReference type="SAM" id="MobiDB-lite"/>
    </source>
</evidence>
<protein>
    <recommendedName>
        <fullName evidence="2">tRNA (guanine-N(7)-)-methyltransferase</fullName>
        <ecNumber evidence="2">2.1.1.33</ecNumber>
    </recommendedName>
    <alternativeName>
        <fullName evidence="2">tRNA (guanine(46)-N(7))-methyltransferase</fullName>
    </alternativeName>
    <alternativeName>
        <fullName evidence="2">tRNA(m7G46)-methyltransferase</fullName>
    </alternativeName>
</protein>